<accession>B3R016</accession>
<proteinExistence type="inferred from homology"/>
<dbReference type="EMBL" id="CU469464">
    <property type="protein sequence ID" value="CAP18553.1"/>
    <property type="molecule type" value="Genomic_DNA"/>
</dbReference>
<dbReference type="SMR" id="B3R016"/>
<dbReference type="STRING" id="37692.ATP_00366"/>
<dbReference type="KEGG" id="pml:ATP_00366"/>
<dbReference type="eggNOG" id="COG0100">
    <property type="taxonomic scope" value="Bacteria"/>
</dbReference>
<dbReference type="HOGENOM" id="CLU_072439_5_0_14"/>
<dbReference type="Proteomes" id="UP000002020">
    <property type="component" value="Chromosome"/>
</dbReference>
<dbReference type="GO" id="GO:1990904">
    <property type="term" value="C:ribonucleoprotein complex"/>
    <property type="evidence" value="ECO:0007669"/>
    <property type="project" value="UniProtKB-KW"/>
</dbReference>
<dbReference type="GO" id="GO:0005840">
    <property type="term" value="C:ribosome"/>
    <property type="evidence" value="ECO:0007669"/>
    <property type="project" value="UniProtKB-KW"/>
</dbReference>
<dbReference type="GO" id="GO:0019843">
    <property type="term" value="F:rRNA binding"/>
    <property type="evidence" value="ECO:0007669"/>
    <property type="project" value="UniProtKB-UniRule"/>
</dbReference>
<dbReference type="GO" id="GO:0003735">
    <property type="term" value="F:structural constituent of ribosome"/>
    <property type="evidence" value="ECO:0007669"/>
    <property type="project" value="InterPro"/>
</dbReference>
<dbReference type="GO" id="GO:0006412">
    <property type="term" value="P:translation"/>
    <property type="evidence" value="ECO:0007669"/>
    <property type="project" value="UniProtKB-UniRule"/>
</dbReference>
<dbReference type="FunFam" id="3.30.420.80:FF:000001">
    <property type="entry name" value="30S ribosomal protein S11"/>
    <property type="match status" value="1"/>
</dbReference>
<dbReference type="Gene3D" id="3.30.420.80">
    <property type="entry name" value="Ribosomal protein S11"/>
    <property type="match status" value="1"/>
</dbReference>
<dbReference type="HAMAP" id="MF_01310">
    <property type="entry name" value="Ribosomal_uS11"/>
    <property type="match status" value="1"/>
</dbReference>
<dbReference type="InterPro" id="IPR001971">
    <property type="entry name" value="Ribosomal_uS11"/>
</dbReference>
<dbReference type="InterPro" id="IPR019981">
    <property type="entry name" value="Ribosomal_uS11_bac-type"/>
</dbReference>
<dbReference type="InterPro" id="IPR036967">
    <property type="entry name" value="Ribosomal_uS11_sf"/>
</dbReference>
<dbReference type="NCBIfam" id="NF003698">
    <property type="entry name" value="PRK05309.1"/>
    <property type="match status" value="1"/>
</dbReference>
<dbReference type="NCBIfam" id="TIGR03632">
    <property type="entry name" value="uS11_bact"/>
    <property type="match status" value="1"/>
</dbReference>
<dbReference type="PANTHER" id="PTHR11759">
    <property type="entry name" value="40S RIBOSOMAL PROTEIN S14/30S RIBOSOMAL PROTEIN S11"/>
    <property type="match status" value="1"/>
</dbReference>
<dbReference type="Pfam" id="PF00411">
    <property type="entry name" value="Ribosomal_S11"/>
    <property type="match status" value="1"/>
</dbReference>
<dbReference type="PIRSF" id="PIRSF002131">
    <property type="entry name" value="Ribosomal_S11"/>
    <property type="match status" value="1"/>
</dbReference>
<dbReference type="SUPFAM" id="SSF53137">
    <property type="entry name" value="Translational machinery components"/>
    <property type="match status" value="1"/>
</dbReference>
<name>RS11_PHYMT</name>
<protein>
    <recommendedName>
        <fullName evidence="1">Small ribosomal subunit protein uS11</fullName>
    </recommendedName>
    <alternativeName>
        <fullName evidence="2">30S ribosomal protein S11</fullName>
    </alternativeName>
</protein>
<evidence type="ECO:0000255" key="1">
    <source>
        <dbReference type="HAMAP-Rule" id="MF_01310"/>
    </source>
</evidence>
<evidence type="ECO:0000305" key="2"/>
<keyword id="KW-1185">Reference proteome</keyword>
<keyword id="KW-0687">Ribonucleoprotein</keyword>
<keyword id="KW-0689">Ribosomal protein</keyword>
<keyword id="KW-0694">RNA-binding</keyword>
<keyword id="KW-0699">rRNA-binding</keyword>
<reference key="1">
    <citation type="journal article" date="2008" name="BMC Genomics">
        <title>The linear chromosome of the plant-pathogenic mycoplasma 'Candidatus Phytoplasma mali'.</title>
        <authorList>
            <person name="Kube M."/>
            <person name="Schneider B."/>
            <person name="Kuhl H."/>
            <person name="Dandekar T."/>
            <person name="Heitmann K."/>
            <person name="Migdoll A.M."/>
            <person name="Reinhardt R."/>
            <person name="Seemueller E."/>
        </authorList>
    </citation>
    <scope>NUCLEOTIDE SEQUENCE [LARGE SCALE GENOMIC DNA]</scope>
    <source>
        <strain>AT</strain>
    </source>
</reference>
<comment type="function">
    <text evidence="1">Located on the platform of the 30S subunit, it bridges several disparate RNA helices of the 16S rRNA. Forms part of the Shine-Dalgarno cleft in the 70S ribosome.</text>
</comment>
<comment type="subunit">
    <text evidence="1">Part of the 30S ribosomal subunit. Interacts with proteins S7 and S18. Binds to IF-3.</text>
</comment>
<comment type="similarity">
    <text evidence="1">Belongs to the universal ribosomal protein uS11 family.</text>
</comment>
<gene>
    <name evidence="1" type="primary">rpsK</name>
    <name type="ordered locus">ATP_00366</name>
</gene>
<organism>
    <name type="scientific">Phytoplasma mali (strain AT)</name>
    <dbReference type="NCBI Taxonomy" id="482235"/>
    <lineage>
        <taxon>Bacteria</taxon>
        <taxon>Bacillati</taxon>
        <taxon>Mycoplasmatota</taxon>
        <taxon>Mollicutes</taxon>
        <taxon>Acholeplasmatales</taxon>
        <taxon>Acholeplasmataceae</taxon>
        <taxon>Candidatus Phytoplasma</taxon>
        <taxon>16SrX (Apple proliferation group)</taxon>
    </lineage>
</organism>
<feature type="chain" id="PRO_1000165561" description="Small ribosomal subunit protein uS11">
    <location>
        <begin position="1"/>
        <end position="130"/>
    </location>
</feature>
<sequence length="130" mass="14015">MFMIKKKKNKNKFKKNINLGIAHIHTTFNNTILTITDLQGNTITWSSAGSLGFKGSRKSTPFAAQIASSTAAKAALEHGMLKVEVFIKGPGAGREASIRSLQASGLEITSIRDVTTVPHNGCRPPKRPRG</sequence>